<sequence length="443" mass="50271">MEKLASLYHHHLATLQARAQTVLARHQLDALLIHSGELLTVFLDDHDYPFKVNPQFKAWVPVTQVPNCWLWVDGVNPPKLWFYSPVDYWHNVAPVPESFWTEEIDITVLRNADDIGQLLPSQRERVAYIGYAPQRAQDLGIRADNINPQSVLDYLHYHRAYKTDYELACMREAQKTAVIGHRAAHEAFLSGMSEFDINLAYLTATGHRDIDVPYGNIVALNEHAAVLHYTQLDHHAPSDVRSFLIDAGAEYNGYAADLTRTYSAQSDGAFALLIKDLNQEMLALIDTVQAGVRYTDYHIQMHQRIAKLLKSHQLVRDISEEAMVEQGLTSPFLPHGLGHPLGLQVHDVAGFMQDDRGTHLAAPSQYPYLRCTRVLEPGMVMTIEPGIYFIESLLAPWREGELCQHFDWQKVDALKPFGGIRIEDNIVIHDGRVENMTRDLNLA</sequence>
<keyword id="KW-0224">Dipeptidase</keyword>
<keyword id="KW-0378">Hydrolase</keyword>
<keyword id="KW-0464">Manganese</keyword>
<keyword id="KW-0479">Metal-binding</keyword>
<keyword id="KW-0482">Metalloprotease</keyword>
<keyword id="KW-0645">Protease</keyword>
<evidence type="ECO:0000255" key="1">
    <source>
        <dbReference type="HAMAP-Rule" id="MF_01279"/>
    </source>
</evidence>
<accession>C6DI64</accession>
<name>PEPQ_PECCP</name>
<protein>
    <recommendedName>
        <fullName evidence="1">Xaa-Pro dipeptidase</fullName>
        <shortName evidence="1">X-Pro dipeptidase</shortName>
        <ecNumber evidence="1">3.4.13.9</ecNumber>
    </recommendedName>
    <alternativeName>
        <fullName evidence="1">Imidodipeptidase</fullName>
    </alternativeName>
    <alternativeName>
        <fullName evidence="1">Proline dipeptidase</fullName>
        <shortName evidence="1">Prolidase</shortName>
    </alternativeName>
</protein>
<comment type="function">
    <text evidence="1">Splits dipeptides with a prolyl residue in the C-terminal position.</text>
</comment>
<comment type="catalytic activity">
    <reaction evidence="1">
        <text>Xaa-L-Pro dipeptide + H2O = an L-alpha-amino acid + L-proline</text>
        <dbReference type="Rhea" id="RHEA:76407"/>
        <dbReference type="ChEBI" id="CHEBI:15377"/>
        <dbReference type="ChEBI" id="CHEBI:59869"/>
        <dbReference type="ChEBI" id="CHEBI:60039"/>
        <dbReference type="ChEBI" id="CHEBI:195196"/>
        <dbReference type="EC" id="3.4.13.9"/>
    </reaction>
</comment>
<comment type="cofactor">
    <cofactor evidence="1">
        <name>Mn(2+)</name>
        <dbReference type="ChEBI" id="CHEBI:29035"/>
    </cofactor>
    <text evidence="1">Binds 2 manganese ions per subunit.</text>
</comment>
<comment type="similarity">
    <text evidence="1">Belongs to the peptidase M24B family. Bacterial-type prolidase subfamily.</text>
</comment>
<organism>
    <name type="scientific">Pectobacterium carotovorum subsp. carotovorum (strain PC1)</name>
    <dbReference type="NCBI Taxonomy" id="561230"/>
    <lineage>
        <taxon>Bacteria</taxon>
        <taxon>Pseudomonadati</taxon>
        <taxon>Pseudomonadota</taxon>
        <taxon>Gammaproteobacteria</taxon>
        <taxon>Enterobacterales</taxon>
        <taxon>Pectobacteriaceae</taxon>
        <taxon>Pectobacterium</taxon>
    </lineage>
</organism>
<gene>
    <name evidence="1" type="primary">pepQ</name>
    <name type="ordered locus">PC1_4043</name>
</gene>
<proteinExistence type="inferred from homology"/>
<reference key="1">
    <citation type="submission" date="2009-07" db="EMBL/GenBank/DDBJ databases">
        <title>Complete sequence of Pectobacterium carotovorum subsp. carotovorum PC1.</title>
        <authorList>
            <consortium name="US DOE Joint Genome Institute"/>
            <person name="Lucas S."/>
            <person name="Copeland A."/>
            <person name="Lapidus A."/>
            <person name="Glavina del Rio T."/>
            <person name="Tice H."/>
            <person name="Bruce D."/>
            <person name="Goodwin L."/>
            <person name="Pitluck S."/>
            <person name="Munk A.C."/>
            <person name="Brettin T."/>
            <person name="Detter J.C."/>
            <person name="Han C."/>
            <person name="Tapia R."/>
            <person name="Larimer F."/>
            <person name="Land M."/>
            <person name="Hauser L."/>
            <person name="Kyrpides N."/>
            <person name="Mikhailova N."/>
            <person name="Balakrishnan V."/>
            <person name="Glasner J."/>
            <person name="Perna N.T."/>
        </authorList>
    </citation>
    <scope>NUCLEOTIDE SEQUENCE [LARGE SCALE GENOMIC DNA]</scope>
    <source>
        <strain>PC1</strain>
    </source>
</reference>
<feature type="chain" id="PRO_1000214204" description="Xaa-Pro dipeptidase">
    <location>
        <begin position="1"/>
        <end position="443"/>
    </location>
</feature>
<feature type="binding site" evidence="1">
    <location>
        <position position="246"/>
    </location>
    <ligand>
        <name>Mn(2+)</name>
        <dbReference type="ChEBI" id="CHEBI:29035"/>
        <label>2</label>
    </ligand>
</feature>
<feature type="binding site" evidence="1">
    <location>
        <position position="257"/>
    </location>
    <ligand>
        <name>Mn(2+)</name>
        <dbReference type="ChEBI" id="CHEBI:29035"/>
        <label>1</label>
    </ligand>
</feature>
<feature type="binding site" evidence="1">
    <location>
        <position position="257"/>
    </location>
    <ligand>
        <name>Mn(2+)</name>
        <dbReference type="ChEBI" id="CHEBI:29035"/>
        <label>2</label>
    </ligand>
</feature>
<feature type="binding site" evidence="1">
    <location>
        <position position="339"/>
    </location>
    <ligand>
        <name>Mn(2+)</name>
        <dbReference type="ChEBI" id="CHEBI:29035"/>
        <label>1</label>
    </ligand>
</feature>
<feature type="binding site" evidence="1">
    <location>
        <position position="384"/>
    </location>
    <ligand>
        <name>Mn(2+)</name>
        <dbReference type="ChEBI" id="CHEBI:29035"/>
        <label>1</label>
    </ligand>
</feature>
<feature type="binding site" evidence="1">
    <location>
        <position position="423"/>
    </location>
    <ligand>
        <name>Mn(2+)</name>
        <dbReference type="ChEBI" id="CHEBI:29035"/>
        <label>1</label>
    </ligand>
</feature>
<feature type="binding site" evidence="1">
    <location>
        <position position="423"/>
    </location>
    <ligand>
        <name>Mn(2+)</name>
        <dbReference type="ChEBI" id="CHEBI:29035"/>
        <label>2</label>
    </ligand>
</feature>
<dbReference type="EC" id="3.4.13.9" evidence="1"/>
<dbReference type="EMBL" id="CP001657">
    <property type="protein sequence ID" value="ACT15058.1"/>
    <property type="molecule type" value="Genomic_DNA"/>
</dbReference>
<dbReference type="RefSeq" id="WP_015842135.1">
    <property type="nucleotide sequence ID" value="NC_012917.1"/>
</dbReference>
<dbReference type="SMR" id="C6DI64"/>
<dbReference type="STRING" id="561230.PC1_4043"/>
<dbReference type="KEGG" id="pct:PC1_4043"/>
<dbReference type="eggNOG" id="COG0006">
    <property type="taxonomic scope" value="Bacteria"/>
</dbReference>
<dbReference type="HOGENOM" id="CLU_050675_0_0_6"/>
<dbReference type="OrthoDB" id="9806388at2"/>
<dbReference type="Proteomes" id="UP000002736">
    <property type="component" value="Chromosome"/>
</dbReference>
<dbReference type="GO" id="GO:0005829">
    <property type="term" value="C:cytosol"/>
    <property type="evidence" value="ECO:0007669"/>
    <property type="project" value="TreeGrafter"/>
</dbReference>
<dbReference type="GO" id="GO:0004177">
    <property type="term" value="F:aminopeptidase activity"/>
    <property type="evidence" value="ECO:0007669"/>
    <property type="project" value="TreeGrafter"/>
</dbReference>
<dbReference type="GO" id="GO:0046872">
    <property type="term" value="F:metal ion binding"/>
    <property type="evidence" value="ECO:0007669"/>
    <property type="project" value="UniProtKB-KW"/>
</dbReference>
<dbReference type="GO" id="GO:0008235">
    <property type="term" value="F:metalloexopeptidase activity"/>
    <property type="evidence" value="ECO:0007669"/>
    <property type="project" value="UniProtKB-UniRule"/>
</dbReference>
<dbReference type="GO" id="GO:0016795">
    <property type="term" value="F:phosphoric triester hydrolase activity"/>
    <property type="evidence" value="ECO:0007669"/>
    <property type="project" value="InterPro"/>
</dbReference>
<dbReference type="GO" id="GO:0102009">
    <property type="term" value="F:proline dipeptidase activity"/>
    <property type="evidence" value="ECO:0007669"/>
    <property type="project" value="UniProtKB-EC"/>
</dbReference>
<dbReference type="GO" id="GO:0006508">
    <property type="term" value="P:proteolysis"/>
    <property type="evidence" value="ECO:0007669"/>
    <property type="project" value="UniProtKB-KW"/>
</dbReference>
<dbReference type="Gene3D" id="3.90.230.10">
    <property type="entry name" value="Creatinase/methionine aminopeptidase superfamily"/>
    <property type="match status" value="1"/>
</dbReference>
<dbReference type="Gene3D" id="3.40.350.10">
    <property type="entry name" value="Creatinase/prolidase N-terminal domain"/>
    <property type="match status" value="1"/>
</dbReference>
<dbReference type="HAMAP" id="MF_01279">
    <property type="entry name" value="X_Pro_dipeptid"/>
    <property type="match status" value="1"/>
</dbReference>
<dbReference type="InterPro" id="IPR029149">
    <property type="entry name" value="Creatin/AminoP/Spt16_N"/>
</dbReference>
<dbReference type="InterPro" id="IPR036005">
    <property type="entry name" value="Creatinase/aminopeptidase-like"/>
</dbReference>
<dbReference type="InterPro" id="IPR048819">
    <property type="entry name" value="PepQ_N"/>
</dbReference>
<dbReference type="InterPro" id="IPR000994">
    <property type="entry name" value="Pept_M24"/>
</dbReference>
<dbReference type="InterPro" id="IPR001131">
    <property type="entry name" value="Peptidase_M24B_aminopep-P_CS"/>
</dbReference>
<dbReference type="InterPro" id="IPR052433">
    <property type="entry name" value="X-Pro_dipept-like"/>
</dbReference>
<dbReference type="InterPro" id="IPR022846">
    <property type="entry name" value="X_Pro_dipept"/>
</dbReference>
<dbReference type="NCBIfam" id="NF010133">
    <property type="entry name" value="PRK13607.1"/>
    <property type="match status" value="1"/>
</dbReference>
<dbReference type="PANTHER" id="PTHR43226">
    <property type="entry name" value="XAA-PRO AMINOPEPTIDASE 3"/>
    <property type="match status" value="1"/>
</dbReference>
<dbReference type="PANTHER" id="PTHR43226:SF8">
    <property type="entry name" value="XAA-PRO DIPEPTIDASE"/>
    <property type="match status" value="1"/>
</dbReference>
<dbReference type="Pfam" id="PF21216">
    <property type="entry name" value="PepQ_N"/>
    <property type="match status" value="1"/>
</dbReference>
<dbReference type="Pfam" id="PF00557">
    <property type="entry name" value="Peptidase_M24"/>
    <property type="match status" value="1"/>
</dbReference>
<dbReference type="SUPFAM" id="SSF55920">
    <property type="entry name" value="Creatinase/aminopeptidase"/>
    <property type="match status" value="1"/>
</dbReference>
<dbReference type="PROSITE" id="PS00491">
    <property type="entry name" value="PROLINE_PEPTIDASE"/>
    <property type="match status" value="1"/>
</dbReference>